<organism>
    <name type="scientific">Bordetella bronchiseptica (strain ATCC BAA-588 / NCTC 13252 / RB50)</name>
    <name type="common">Alcaligenes bronchisepticus</name>
    <dbReference type="NCBI Taxonomy" id="257310"/>
    <lineage>
        <taxon>Bacteria</taxon>
        <taxon>Pseudomonadati</taxon>
        <taxon>Pseudomonadota</taxon>
        <taxon>Betaproteobacteria</taxon>
        <taxon>Burkholderiales</taxon>
        <taxon>Alcaligenaceae</taxon>
        <taxon>Bordetella</taxon>
    </lineage>
</organism>
<feature type="chain" id="PRO_0000193927" description="Iron-sulfur cluster assembly protein CyaY">
    <location>
        <begin position="1"/>
        <end position="109"/>
    </location>
</feature>
<sequence length="109" mass="11821">MTETEFLALVDQVLDSIESQADDWAAGLDVDIEATRSGNVLTLVFEDGTQVVVNAQAAMQELWVAARSGGFHYRYDGQHWNDTRGGPRLPDALSQICSEAAGVPVSVRL</sequence>
<comment type="function">
    <text evidence="1">Involved in iron-sulfur (Fe-S) cluster assembly. May act as a regulator of Fe-S biogenesis.</text>
</comment>
<comment type="similarity">
    <text evidence="1">Belongs to the frataxin family.</text>
</comment>
<protein>
    <recommendedName>
        <fullName evidence="1">Iron-sulfur cluster assembly protein CyaY</fullName>
    </recommendedName>
</protein>
<keyword id="KW-0408">Iron</keyword>
<keyword id="KW-0479">Metal-binding</keyword>
<gene>
    <name evidence="1" type="primary">cyaY</name>
    <name type="ordered locus">BB0069</name>
</gene>
<name>CYAY_BORBR</name>
<accession>Q7WR87</accession>
<proteinExistence type="inferred from homology"/>
<dbReference type="EMBL" id="BX640437">
    <property type="protein sequence ID" value="CAE30571.1"/>
    <property type="molecule type" value="Genomic_DNA"/>
</dbReference>
<dbReference type="RefSeq" id="WP_003806945.1">
    <property type="nucleotide sequence ID" value="NC_002927.3"/>
</dbReference>
<dbReference type="SMR" id="Q7WR87"/>
<dbReference type="GeneID" id="93206300"/>
<dbReference type="KEGG" id="bbr:BB0069"/>
<dbReference type="eggNOG" id="COG1965">
    <property type="taxonomic scope" value="Bacteria"/>
</dbReference>
<dbReference type="HOGENOM" id="CLU_080880_3_0_4"/>
<dbReference type="Proteomes" id="UP000001027">
    <property type="component" value="Chromosome"/>
</dbReference>
<dbReference type="GO" id="GO:0005737">
    <property type="term" value="C:cytoplasm"/>
    <property type="evidence" value="ECO:0007669"/>
    <property type="project" value="UniProtKB-ARBA"/>
</dbReference>
<dbReference type="GO" id="GO:0008199">
    <property type="term" value="F:ferric iron binding"/>
    <property type="evidence" value="ECO:0007669"/>
    <property type="project" value="InterPro"/>
</dbReference>
<dbReference type="GO" id="GO:0016226">
    <property type="term" value="P:iron-sulfur cluster assembly"/>
    <property type="evidence" value="ECO:0007669"/>
    <property type="project" value="UniProtKB-UniRule"/>
</dbReference>
<dbReference type="Gene3D" id="3.30.920.10">
    <property type="entry name" value="Frataxin/CyaY"/>
    <property type="match status" value="1"/>
</dbReference>
<dbReference type="HAMAP" id="MF_00142">
    <property type="entry name" value="CyaY"/>
    <property type="match status" value="1"/>
</dbReference>
<dbReference type="InterPro" id="IPR047584">
    <property type="entry name" value="CyaY"/>
</dbReference>
<dbReference type="InterPro" id="IPR002908">
    <property type="entry name" value="Frataxin/CyaY"/>
</dbReference>
<dbReference type="InterPro" id="IPR036524">
    <property type="entry name" value="Frataxin/CyaY_sf"/>
</dbReference>
<dbReference type="InterPro" id="IPR020895">
    <property type="entry name" value="Frataxin_CS"/>
</dbReference>
<dbReference type="NCBIfam" id="TIGR03421">
    <property type="entry name" value="FeS_CyaY"/>
    <property type="match status" value="1"/>
</dbReference>
<dbReference type="Pfam" id="PF01491">
    <property type="entry name" value="Frataxin_Cyay"/>
    <property type="match status" value="1"/>
</dbReference>
<dbReference type="SMART" id="SM01219">
    <property type="entry name" value="Frataxin_Cyay"/>
    <property type="match status" value="1"/>
</dbReference>
<dbReference type="SUPFAM" id="SSF55387">
    <property type="entry name" value="Frataxin/Nqo15-like"/>
    <property type="match status" value="1"/>
</dbReference>
<dbReference type="PROSITE" id="PS01344">
    <property type="entry name" value="FRATAXIN_1"/>
    <property type="match status" value="1"/>
</dbReference>
<dbReference type="PROSITE" id="PS50810">
    <property type="entry name" value="FRATAXIN_2"/>
    <property type="match status" value="1"/>
</dbReference>
<reference key="1">
    <citation type="journal article" date="2003" name="Nat. Genet.">
        <title>Comparative analysis of the genome sequences of Bordetella pertussis, Bordetella parapertussis and Bordetella bronchiseptica.</title>
        <authorList>
            <person name="Parkhill J."/>
            <person name="Sebaihia M."/>
            <person name="Preston A."/>
            <person name="Murphy L.D."/>
            <person name="Thomson N.R."/>
            <person name="Harris D.E."/>
            <person name="Holden M.T.G."/>
            <person name="Churcher C.M."/>
            <person name="Bentley S.D."/>
            <person name="Mungall K.L."/>
            <person name="Cerdeno-Tarraga A.-M."/>
            <person name="Temple L."/>
            <person name="James K.D."/>
            <person name="Harris B."/>
            <person name="Quail M.A."/>
            <person name="Achtman M."/>
            <person name="Atkin R."/>
            <person name="Baker S."/>
            <person name="Basham D."/>
            <person name="Bason N."/>
            <person name="Cherevach I."/>
            <person name="Chillingworth T."/>
            <person name="Collins M."/>
            <person name="Cronin A."/>
            <person name="Davis P."/>
            <person name="Doggett J."/>
            <person name="Feltwell T."/>
            <person name="Goble A."/>
            <person name="Hamlin N."/>
            <person name="Hauser H."/>
            <person name="Holroyd S."/>
            <person name="Jagels K."/>
            <person name="Leather S."/>
            <person name="Moule S."/>
            <person name="Norberczak H."/>
            <person name="O'Neil S."/>
            <person name="Ormond D."/>
            <person name="Price C."/>
            <person name="Rabbinowitsch E."/>
            <person name="Rutter S."/>
            <person name="Sanders M."/>
            <person name="Saunders D."/>
            <person name="Seeger K."/>
            <person name="Sharp S."/>
            <person name="Simmonds M."/>
            <person name="Skelton J."/>
            <person name="Squares R."/>
            <person name="Squares S."/>
            <person name="Stevens K."/>
            <person name="Unwin L."/>
            <person name="Whitehead S."/>
            <person name="Barrell B.G."/>
            <person name="Maskell D.J."/>
        </authorList>
    </citation>
    <scope>NUCLEOTIDE SEQUENCE [LARGE SCALE GENOMIC DNA]</scope>
    <source>
        <strain>ATCC BAA-588 / NCTC 13252 / RB50</strain>
    </source>
</reference>
<evidence type="ECO:0000255" key="1">
    <source>
        <dbReference type="HAMAP-Rule" id="MF_00142"/>
    </source>
</evidence>